<comment type="function">
    <text evidence="1">Catalyzes the attachment of valine to tRNA(Val). As ValRS can inadvertently accommodate and process structurally similar amino acids such as threonine, to avoid such errors, it has a 'posttransfer' editing activity that hydrolyzes mischarged Thr-tRNA(Val) in a tRNA-dependent manner.</text>
</comment>
<comment type="catalytic activity">
    <reaction evidence="1">
        <text>tRNA(Val) + L-valine + ATP = L-valyl-tRNA(Val) + AMP + diphosphate</text>
        <dbReference type="Rhea" id="RHEA:10704"/>
        <dbReference type="Rhea" id="RHEA-COMP:9672"/>
        <dbReference type="Rhea" id="RHEA-COMP:9708"/>
        <dbReference type="ChEBI" id="CHEBI:30616"/>
        <dbReference type="ChEBI" id="CHEBI:33019"/>
        <dbReference type="ChEBI" id="CHEBI:57762"/>
        <dbReference type="ChEBI" id="CHEBI:78442"/>
        <dbReference type="ChEBI" id="CHEBI:78537"/>
        <dbReference type="ChEBI" id="CHEBI:456215"/>
        <dbReference type="EC" id="6.1.1.9"/>
    </reaction>
</comment>
<comment type="subunit">
    <text evidence="1">Monomer.</text>
</comment>
<comment type="subcellular location">
    <subcellularLocation>
        <location evidence="1">Cytoplasm</location>
    </subcellularLocation>
</comment>
<comment type="domain">
    <text evidence="1">ValRS has two distinct active sites: one for aminoacylation and one for editing. The misactivated threonine is translocated from the active site to the editing site.</text>
</comment>
<comment type="domain">
    <text evidence="1">The C-terminal coiled-coil domain is crucial for aminoacylation activity.</text>
</comment>
<comment type="similarity">
    <text evidence="1">Belongs to the class-I aminoacyl-tRNA synthetase family. ValS type 1 subfamily.</text>
</comment>
<keyword id="KW-0030">Aminoacyl-tRNA synthetase</keyword>
<keyword id="KW-0067">ATP-binding</keyword>
<keyword id="KW-0175">Coiled coil</keyword>
<keyword id="KW-0963">Cytoplasm</keyword>
<keyword id="KW-0436">Ligase</keyword>
<keyword id="KW-0547">Nucleotide-binding</keyword>
<keyword id="KW-0648">Protein biosynthesis</keyword>
<keyword id="KW-1185">Reference proteome</keyword>
<feature type="chain" id="PRO_0000224569" description="Valine--tRNA ligase">
    <location>
        <begin position="1"/>
        <end position="876"/>
    </location>
</feature>
<feature type="coiled-coil region" evidence="1">
    <location>
        <begin position="806"/>
        <end position="876"/>
    </location>
</feature>
<feature type="short sequence motif" description="'HIGH' region">
    <location>
        <begin position="44"/>
        <end position="54"/>
    </location>
</feature>
<feature type="short sequence motif" description="'KMSKS' region">
    <location>
        <begin position="520"/>
        <end position="524"/>
    </location>
</feature>
<feature type="binding site" evidence="1">
    <location>
        <position position="523"/>
    </location>
    <ligand>
        <name>ATP</name>
        <dbReference type="ChEBI" id="CHEBI:30616"/>
    </ligand>
</feature>
<gene>
    <name evidence="1" type="primary">valS</name>
    <name type="ordered locus">SSP1101</name>
</gene>
<accession>Q49Y96</accession>
<name>SYV_STAS1</name>
<evidence type="ECO:0000255" key="1">
    <source>
        <dbReference type="HAMAP-Rule" id="MF_02004"/>
    </source>
</evidence>
<proteinExistence type="inferred from homology"/>
<protein>
    <recommendedName>
        <fullName evidence="1">Valine--tRNA ligase</fullName>
        <ecNumber evidence="1">6.1.1.9</ecNumber>
    </recommendedName>
    <alternativeName>
        <fullName evidence="1">Valyl-tRNA synthetase</fullName>
        <shortName evidence="1">ValRS</shortName>
    </alternativeName>
</protein>
<organism>
    <name type="scientific">Staphylococcus saprophyticus subsp. saprophyticus (strain ATCC 15305 / DSM 20229 / NCIMB 8711 / NCTC 7292 / S-41)</name>
    <dbReference type="NCBI Taxonomy" id="342451"/>
    <lineage>
        <taxon>Bacteria</taxon>
        <taxon>Bacillati</taxon>
        <taxon>Bacillota</taxon>
        <taxon>Bacilli</taxon>
        <taxon>Bacillales</taxon>
        <taxon>Staphylococcaceae</taxon>
        <taxon>Staphylococcus</taxon>
    </lineage>
</organism>
<sequence length="876" mass="101776">MEMKPKYNPREVESGRYDQWVNSGYFKAKDDQSKETYTIVIPPPNVTGKLHLGHAWDTTLQDILTRMKRMQGYDTLYLPGMDHAGIATQAKVEAKLNEQGLSRHDLGREKFLEQAWDWKEEYANFIRQQWAKLGLGLDYSRERFTLDEGLSKAVKKVFVDMYNKGLIYRGEYIINWDPIARTALSDIEVIHEDVQGKFYHFKYPYADGNGYIEIATTRPETMLGDTAIVVNPNDERYKDVIGKTVILPIVGRELPILADEYVDIEFGSGAMKVTPAHDPNDFEIGNRHDLERIIVMDESGKMNDKADKYQGMDRFDCREQLVKDLEAENLVIKIEEHEHSVGHSERSGAVVEPYLSTQWFVKMKPLAEQALNNQKTDDRIDFVPARFEKTFNRWMEEIRDWTISRQLWWGHQIPAWYHKETGEIFVGEHEPEDIENWVQDEDVLDTWFSSALWPFSTLGWPDVEADDFQRYFPTNALVTGYDIIFFWVARMIFQGLEFTGKRPFNDVLLHGLVRAEDGRKMSKSLGNGVDPMDVIDEYGADSLRYFLATGSSPGHDLRYSTEKVESIWNFINKIWNAARFSIMNIGEDFTVEQVDLSGDLSLADKWILTRLNETIENVTELSDKYEFGEVGRTLYNFIWDEFCDWYIEMSKIPMNGEDEAQKQITRSVLTYVLDNTMRMLHPFMPFVTEQIWQNLPHEGETIVKAAWPKVNEALVFDDSKETMQQLVEIIKSVRQSRLEVDTPLSKAIPIFIKAKDENIKETLLNNSNYIDRFCHPSELTIDTTIEIPEKAMTSVTTAGEVVLPLEGLIDMDKEIARLENELLKWEKELDRVNKKLANENFVNKAPEKVINEEREKKQTYQEKYDGVKLRINQLKA</sequence>
<dbReference type="EC" id="6.1.1.9" evidence="1"/>
<dbReference type="EMBL" id="AP008934">
    <property type="protein sequence ID" value="BAE18246.1"/>
    <property type="molecule type" value="Genomic_DNA"/>
</dbReference>
<dbReference type="RefSeq" id="WP_002483080.1">
    <property type="nucleotide sequence ID" value="NZ_MTGA01000038.1"/>
</dbReference>
<dbReference type="SMR" id="Q49Y96"/>
<dbReference type="GeneID" id="3614943"/>
<dbReference type="KEGG" id="ssp:SSP1101"/>
<dbReference type="eggNOG" id="COG0525">
    <property type="taxonomic scope" value="Bacteria"/>
</dbReference>
<dbReference type="HOGENOM" id="CLU_001493_0_2_9"/>
<dbReference type="OrthoDB" id="9810365at2"/>
<dbReference type="Proteomes" id="UP000006371">
    <property type="component" value="Chromosome"/>
</dbReference>
<dbReference type="GO" id="GO:0005829">
    <property type="term" value="C:cytosol"/>
    <property type="evidence" value="ECO:0007669"/>
    <property type="project" value="TreeGrafter"/>
</dbReference>
<dbReference type="GO" id="GO:0002161">
    <property type="term" value="F:aminoacyl-tRNA deacylase activity"/>
    <property type="evidence" value="ECO:0007669"/>
    <property type="project" value="InterPro"/>
</dbReference>
<dbReference type="GO" id="GO:0005524">
    <property type="term" value="F:ATP binding"/>
    <property type="evidence" value="ECO:0007669"/>
    <property type="project" value="UniProtKB-UniRule"/>
</dbReference>
<dbReference type="GO" id="GO:0004832">
    <property type="term" value="F:valine-tRNA ligase activity"/>
    <property type="evidence" value="ECO:0007669"/>
    <property type="project" value="UniProtKB-UniRule"/>
</dbReference>
<dbReference type="GO" id="GO:0006438">
    <property type="term" value="P:valyl-tRNA aminoacylation"/>
    <property type="evidence" value="ECO:0007669"/>
    <property type="project" value="UniProtKB-UniRule"/>
</dbReference>
<dbReference type="CDD" id="cd07962">
    <property type="entry name" value="Anticodon_Ia_Val"/>
    <property type="match status" value="1"/>
</dbReference>
<dbReference type="CDD" id="cd00817">
    <property type="entry name" value="ValRS_core"/>
    <property type="match status" value="1"/>
</dbReference>
<dbReference type="FunFam" id="1.10.287.380:FF:000001">
    <property type="entry name" value="Valine--tRNA ligase"/>
    <property type="match status" value="1"/>
</dbReference>
<dbReference type="FunFam" id="1.10.730.10:FF:000014">
    <property type="entry name" value="Valine--tRNA ligase"/>
    <property type="match status" value="1"/>
</dbReference>
<dbReference type="FunFam" id="3.40.50.620:FF:000032">
    <property type="entry name" value="Valine--tRNA ligase"/>
    <property type="match status" value="1"/>
</dbReference>
<dbReference type="FunFam" id="3.40.50.620:FF:000098">
    <property type="entry name" value="Valine--tRNA ligase"/>
    <property type="match status" value="1"/>
</dbReference>
<dbReference type="FunFam" id="3.90.740.10:FF:000005">
    <property type="entry name" value="Valine--tRNA ligase, mitochondrial"/>
    <property type="match status" value="1"/>
</dbReference>
<dbReference type="Gene3D" id="3.40.50.620">
    <property type="entry name" value="HUPs"/>
    <property type="match status" value="2"/>
</dbReference>
<dbReference type="Gene3D" id="1.10.730.10">
    <property type="entry name" value="Isoleucyl-tRNA Synthetase, Domain 1"/>
    <property type="match status" value="1"/>
</dbReference>
<dbReference type="Gene3D" id="1.10.287.380">
    <property type="entry name" value="Valyl-tRNA synthetase, C-terminal domain"/>
    <property type="match status" value="1"/>
</dbReference>
<dbReference type="Gene3D" id="3.90.740.10">
    <property type="entry name" value="Valyl/Leucyl/Isoleucyl-tRNA synthetase, editing domain"/>
    <property type="match status" value="1"/>
</dbReference>
<dbReference type="HAMAP" id="MF_02004">
    <property type="entry name" value="Val_tRNA_synth_type1"/>
    <property type="match status" value="1"/>
</dbReference>
<dbReference type="InterPro" id="IPR001412">
    <property type="entry name" value="aa-tRNA-synth_I_CS"/>
</dbReference>
<dbReference type="InterPro" id="IPR002300">
    <property type="entry name" value="aa-tRNA-synth_Ia"/>
</dbReference>
<dbReference type="InterPro" id="IPR033705">
    <property type="entry name" value="Anticodon_Ia_Val"/>
</dbReference>
<dbReference type="InterPro" id="IPR013155">
    <property type="entry name" value="M/V/L/I-tRNA-synth_anticd-bd"/>
</dbReference>
<dbReference type="InterPro" id="IPR014729">
    <property type="entry name" value="Rossmann-like_a/b/a_fold"/>
</dbReference>
<dbReference type="InterPro" id="IPR010978">
    <property type="entry name" value="tRNA-bd_arm"/>
</dbReference>
<dbReference type="InterPro" id="IPR009080">
    <property type="entry name" value="tRNAsynth_Ia_anticodon-bd"/>
</dbReference>
<dbReference type="InterPro" id="IPR037118">
    <property type="entry name" value="Val-tRNA_synth_C_sf"/>
</dbReference>
<dbReference type="InterPro" id="IPR019499">
    <property type="entry name" value="Val-tRNA_synth_tRNA-bd"/>
</dbReference>
<dbReference type="InterPro" id="IPR009008">
    <property type="entry name" value="Val/Leu/Ile-tRNA-synth_edit"/>
</dbReference>
<dbReference type="InterPro" id="IPR002303">
    <property type="entry name" value="Valyl-tRNA_ligase"/>
</dbReference>
<dbReference type="NCBIfam" id="NF004349">
    <property type="entry name" value="PRK05729.1"/>
    <property type="match status" value="1"/>
</dbReference>
<dbReference type="NCBIfam" id="TIGR00422">
    <property type="entry name" value="valS"/>
    <property type="match status" value="1"/>
</dbReference>
<dbReference type="PANTHER" id="PTHR11946:SF93">
    <property type="entry name" value="VALINE--TRNA LIGASE, CHLOROPLASTIC_MITOCHONDRIAL 2"/>
    <property type="match status" value="1"/>
</dbReference>
<dbReference type="PANTHER" id="PTHR11946">
    <property type="entry name" value="VALYL-TRNA SYNTHETASES"/>
    <property type="match status" value="1"/>
</dbReference>
<dbReference type="Pfam" id="PF08264">
    <property type="entry name" value="Anticodon_1"/>
    <property type="match status" value="1"/>
</dbReference>
<dbReference type="Pfam" id="PF00133">
    <property type="entry name" value="tRNA-synt_1"/>
    <property type="match status" value="1"/>
</dbReference>
<dbReference type="Pfam" id="PF10458">
    <property type="entry name" value="Val_tRNA-synt_C"/>
    <property type="match status" value="1"/>
</dbReference>
<dbReference type="PRINTS" id="PR00986">
    <property type="entry name" value="TRNASYNTHVAL"/>
</dbReference>
<dbReference type="SUPFAM" id="SSF47323">
    <property type="entry name" value="Anticodon-binding domain of a subclass of class I aminoacyl-tRNA synthetases"/>
    <property type="match status" value="1"/>
</dbReference>
<dbReference type="SUPFAM" id="SSF52374">
    <property type="entry name" value="Nucleotidylyl transferase"/>
    <property type="match status" value="1"/>
</dbReference>
<dbReference type="SUPFAM" id="SSF46589">
    <property type="entry name" value="tRNA-binding arm"/>
    <property type="match status" value="1"/>
</dbReference>
<dbReference type="SUPFAM" id="SSF50677">
    <property type="entry name" value="ValRS/IleRS/LeuRS editing domain"/>
    <property type="match status" value="1"/>
</dbReference>
<dbReference type="PROSITE" id="PS00178">
    <property type="entry name" value="AA_TRNA_LIGASE_I"/>
    <property type="match status" value="1"/>
</dbReference>
<reference key="1">
    <citation type="journal article" date="2005" name="Proc. Natl. Acad. Sci. U.S.A.">
        <title>Whole genome sequence of Staphylococcus saprophyticus reveals the pathogenesis of uncomplicated urinary tract infection.</title>
        <authorList>
            <person name="Kuroda M."/>
            <person name="Yamashita A."/>
            <person name="Hirakawa H."/>
            <person name="Kumano M."/>
            <person name="Morikawa K."/>
            <person name="Higashide M."/>
            <person name="Maruyama A."/>
            <person name="Inose Y."/>
            <person name="Matoba K."/>
            <person name="Toh H."/>
            <person name="Kuhara S."/>
            <person name="Hattori M."/>
            <person name="Ohta T."/>
        </authorList>
    </citation>
    <scope>NUCLEOTIDE SEQUENCE [LARGE SCALE GENOMIC DNA]</scope>
    <source>
        <strain>ATCC 15305 / DSM 20229 / NCIMB 8711 / NCTC 7292 / S-41</strain>
    </source>
</reference>